<keyword id="KW-0002">3D-structure</keyword>
<keyword id="KW-0007">Acetylation</keyword>
<keyword id="KW-0025">Alternative splicing</keyword>
<keyword id="KW-0067">ATP-binding</keyword>
<keyword id="KW-0378">Hydrolase</keyword>
<keyword id="KW-0418">Kinase</keyword>
<keyword id="KW-0511">Multifunctional enzyme</keyword>
<keyword id="KW-0547">Nucleotide-binding</keyword>
<keyword id="KW-0597">Phosphoprotein</keyword>
<keyword id="KW-1267">Proteomics identification</keyword>
<keyword id="KW-1185">Reference proteome</keyword>
<keyword id="KW-0808">Transferase</keyword>
<reference key="1">
    <citation type="journal article" date="1998" name="Eur. J. Biochem.">
        <title>Sequence and structure of the human 6-phosphofructo-2-kinase/fructose-2,6-bisphosphatase heart isoform gene (PFKFB2).</title>
        <authorList>
            <person name="Heine-Suner D."/>
            <person name="Diaz-Guillen M.A."/>
            <person name="Lange A.J."/>
            <person name="Rodriguez de Cordoba S."/>
        </authorList>
    </citation>
    <scope>NUCLEOTIDE SEQUENCE [GENOMIC DNA / MRNA] (ISOFORM 1)</scope>
</reference>
<reference key="2">
    <citation type="journal article" date="2001" name="Genomics">
        <title>Isolation of novel heart-specific genes using the BodyMap database.</title>
        <authorList>
            <person name="Soejima H."/>
            <person name="Kawamoto S."/>
            <person name="Akai J."/>
            <person name="Miyoshi O."/>
            <person name="Arai Y."/>
            <person name="Morohka T."/>
            <person name="Matsuo S."/>
            <person name="Niikawa N."/>
            <person name="Kimura A."/>
            <person name="Okubo K."/>
            <person name="Mukai T."/>
        </authorList>
    </citation>
    <scope>NUCLEOTIDE SEQUENCE [MRNA] (ISOFORM 2)</scope>
    <source>
        <tissue>Heart</tissue>
    </source>
</reference>
<reference key="3">
    <citation type="submission" date="2002-01" db="EMBL/GenBank/DDBJ databases">
        <title>Human insulinoma PFK2/F26DPase.</title>
        <authorList>
            <person name="Matsutani A."/>
        </authorList>
    </citation>
    <scope>NUCLEOTIDE SEQUENCE [MRNA] (ISOFORM 2)</scope>
</reference>
<reference key="4">
    <citation type="journal article" date="2004" name="Nat. Genet.">
        <title>Complete sequencing and characterization of 21,243 full-length human cDNAs.</title>
        <authorList>
            <person name="Ota T."/>
            <person name="Suzuki Y."/>
            <person name="Nishikawa T."/>
            <person name="Otsuki T."/>
            <person name="Sugiyama T."/>
            <person name="Irie R."/>
            <person name="Wakamatsu A."/>
            <person name="Hayashi K."/>
            <person name="Sato H."/>
            <person name="Nagai K."/>
            <person name="Kimura K."/>
            <person name="Makita H."/>
            <person name="Sekine M."/>
            <person name="Obayashi M."/>
            <person name="Nishi T."/>
            <person name="Shibahara T."/>
            <person name="Tanaka T."/>
            <person name="Ishii S."/>
            <person name="Yamamoto J."/>
            <person name="Saito K."/>
            <person name="Kawai Y."/>
            <person name="Isono Y."/>
            <person name="Nakamura Y."/>
            <person name="Nagahari K."/>
            <person name="Murakami K."/>
            <person name="Yasuda T."/>
            <person name="Iwayanagi T."/>
            <person name="Wagatsuma M."/>
            <person name="Shiratori A."/>
            <person name="Sudo H."/>
            <person name="Hosoiri T."/>
            <person name="Kaku Y."/>
            <person name="Kodaira H."/>
            <person name="Kondo H."/>
            <person name="Sugawara M."/>
            <person name="Takahashi M."/>
            <person name="Kanda K."/>
            <person name="Yokoi T."/>
            <person name="Furuya T."/>
            <person name="Kikkawa E."/>
            <person name="Omura Y."/>
            <person name="Abe K."/>
            <person name="Kamihara K."/>
            <person name="Katsuta N."/>
            <person name="Sato K."/>
            <person name="Tanikawa M."/>
            <person name="Yamazaki M."/>
            <person name="Ninomiya K."/>
            <person name="Ishibashi T."/>
            <person name="Yamashita H."/>
            <person name="Murakawa K."/>
            <person name="Fujimori K."/>
            <person name="Tanai H."/>
            <person name="Kimata M."/>
            <person name="Watanabe M."/>
            <person name="Hiraoka S."/>
            <person name="Chiba Y."/>
            <person name="Ishida S."/>
            <person name="Ono Y."/>
            <person name="Takiguchi S."/>
            <person name="Watanabe S."/>
            <person name="Yosida M."/>
            <person name="Hotuta T."/>
            <person name="Kusano J."/>
            <person name="Kanehori K."/>
            <person name="Takahashi-Fujii A."/>
            <person name="Hara H."/>
            <person name="Tanase T.-O."/>
            <person name="Nomura Y."/>
            <person name="Togiya S."/>
            <person name="Komai F."/>
            <person name="Hara R."/>
            <person name="Takeuchi K."/>
            <person name="Arita M."/>
            <person name="Imose N."/>
            <person name="Musashino K."/>
            <person name="Yuuki H."/>
            <person name="Oshima A."/>
            <person name="Sasaki N."/>
            <person name="Aotsuka S."/>
            <person name="Yoshikawa Y."/>
            <person name="Matsunawa H."/>
            <person name="Ichihara T."/>
            <person name="Shiohata N."/>
            <person name="Sano S."/>
            <person name="Moriya S."/>
            <person name="Momiyama H."/>
            <person name="Satoh N."/>
            <person name="Takami S."/>
            <person name="Terashima Y."/>
            <person name="Suzuki O."/>
            <person name="Nakagawa S."/>
            <person name="Senoh A."/>
            <person name="Mizoguchi H."/>
            <person name="Goto Y."/>
            <person name="Shimizu F."/>
            <person name="Wakebe H."/>
            <person name="Hishigaki H."/>
            <person name="Watanabe T."/>
            <person name="Sugiyama A."/>
            <person name="Takemoto M."/>
            <person name="Kawakami B."/>
            <person name="Yamazaki M."/>
            <person name="Watanabe K."/>
            <person name="Kumagai A."/>
            <person name="Itakura S."/>
            <person name="Fukuzumi Y."/>
            <person name="Fujimori Y."/>
            <person name="Komiyama M."/>
            <person name="Tashiro H."/>
            <person name="Tanigami A."/>
            <person name="Fujiwara T."/>
            <person name="Ono T."/>
            <person name="Yamada K."/>
            <person name="Fujii Y."/>
            <person name="Ozaki K."/>
            <person name="Hirao M."/>
            <person name="Ohmori Y."/>
            <person name="Kawabata A."/>
            <person name="Hikiji T."/>
            <person name="Kobatake N."/>
            <person name="Inagaki H."/>
            <person name="Ikema Y."/>
            <person name="Okamoto S."/>
            <person name="Okitani R."/>
            <person name="Kawakami T."/>
            <person name="Noguchi S."/>
            <person name="Itoh T."/>
            <person name="Shigeta K."/>
            <person name="Senba T."/>
            <person name="Matsumura K."/>
            <person name="Nakajima Y."/>
            <person name="Mizuno T."/>
            <person name="Morinaga M."/>
            <person name="Sasaki M."/>
            <person name="Togashi T."/>
            <person name="Oyama M."/>
            <person name="Hata H."/>
            <person name="Watanabe M."/>
            <person name="Komatsu T."/>
            <person name="Mizushima-Sugano J."/>
            <person name="Satoh T."/>
            <person name="Shirai Y."/>
            <person name="Takahashi Y."/>
            <person name="Nakagawa K."/>
            <person name="Okumura K."/>
            <person name="Nagase T."/>
            <person name="Nomura N."/>
            <person name="Kikuchi H."/>
            <person name="Masuho Y."/>
            <person name="Yamashita R."/>
            <person name="Nakai K."/>
            <person name="Yada T."/>
            <person name="Nakamura Y."/>
            <person name="Ohara O."/>
            <person name="Isogai T."/>
            <person name="Sugano S."/>
        </authorList>
    </citation>
    <scope>NUCLEOTIDE SEQUENCE [LARGE SCALE MRNA] (ISOFORM 2)</scope>
    <source>
        <tissue>Trachea</tissue>
    </source>
</reference>
<reference key="5">
    <citation type="journal article" date="2006" name="Nature">
        <title>The DNA sequence and biological annotation of human chromosome 1.</title>
        <authorList>
            <person name="Gregory S.G."/>
            <person name="Barlow K.F."/>
            <person name="McLay K.E."/>
            <person name="Kaul R."/>
            <person name="Swarbreck D."/>
            <person name="Dunham A."/>
            <person name="Scott C.E."/>
            <person name="Howe K.L."/>
            <person name="Woodfine K."/>
            <person name="Spencer C.C.A."/>
            <person name="Jones M.C."/>
            <person name="Gillson C."/>
            <person name="Searle S."/>
            <person name="Zhou Y."/>
            <person name="Kokocinski F."/>
            <person name="McDonald L."/>
            <person name="Evans R."/>
            <person name="Phillips K."/>
            <person name="Atkinson A."/>
            <person name="Cooper R."/>
            <person name="Jones C."/>
            <person name="Hall R.E."/>
            <person name="Andrews T.D."/>
            <person name="Lloyd C."/>
            <person name="Ainscough R."/>
            <person name="Almeida J.P."/>
            <person name="Ambrose K.D."/>
            <person name="Anderson F."/>
            <person name="Andrew R.W."/>
            <person name="Ashwell R.I.S."/>
            <person name="Aubin K."/>
            <person name="Babbage A.K."/>
            <person name="Bagguley C.L."/>
            <person name="Bailey J."/>
            <person name="Beasley H."/>
            <person name="Bethel G."/>
            <person name="Bird C.P."/>
            <person name="Bray-Allen S."/>
            <person name="Brown J.Y."/>
            <person name="Brown A.J."/>
            <person name="Buckley D."/>
            <person name="Burton J."/>
            <person name="Bye J."/>
            <person name="Carder C."/>
            <person name="Chapman J.C."/>
            <person name="Clark S.Y."/>
            <person name="Clarke G."/>
            <person name="Clee C."/>
            <person name="Cobley V."/>
            <person name="Collier R.E."/>
            <person name="Corby N."/>
            <person name="Coville G.J."/>
            <person name="Davies J."/>
            <person name="Deadman R."/>
            <person name="Dunn M."/>
            <person name="Earthrowl M."/>
            <person name="Ellington A.G."/>
            <person name="Errington H."/>
            <person name="Frankish A."/>
            <person name="Frankland J."/>
            <person name="French L."/>
            <person name="Garner P."/>
            <person name="Garnett J."/>
            <person name="Gay L."/>
            <person name="Ghori M.R.J."/>
            <person name="Gibson R."/>
            <person name="Gilby L.M."/>
            <person name="Gillett W."/>
            <person name="Glithero R.J."/>
            <person name="Grafham D.V."/>
            <person name="Griffiths C."/>
            <person name="Griffiths-Jones S."/>
            <person name="Grocock R."/>
            <person name="Hammond S."/>
            <person name="Harrison E.S.I."/>
            <person name="Hart E."/>
            <person name="Haugen E."/>
            <person name="Heath P.D."/>
            <person name="Holmes S."/>
            <person name="Holt K."/>
            <person name="Howden P.J."/>
            <person name="Hunt A.R."/>
            <person name="Hunt S.E."/>
            <person name="Hunter G."/>
            <person name="Isherwood J."/>
            <person name="James R."/>
            <person name="Johnson C."/>
            <person name="Johnson D."/>
            <person name="Joy A."/>
            <person name="Kay M."/>
            <person name="Kershaw J.K."/>
            <person name="Kibukawa M."/>
            <person name="Kimberley A.M."/>
            <person name="King A."/>
            <person name="Knights A.J."/>
            <person name="Lad H."/>
            <person name="Laird G."/>
            <person name="Lawlor S."/>
            <person name="Leongamornlert D.A."/>
            <person name="Lloyd D.M."/>
            <person name="Loveland J."/>
            <person name="Lovell J."/>
            <person name="Lush M.J."/>
            <person name="Lyne R."/>
            <person name="Martin S."/>
            <person name="Mashreghi-Mohammadi M."/>
            <person name="Matthews L."/>
            <person name="Matthews N.S.W."/>
            <person name="McLaren S."/>
            <person name="Milne S."/>
            <person name="Mistry S."/>
            <person name="Moore M.J.F."/>
            <person name="Nickerson T."/>
            <person name="O'Dell C.N."/>
            <person name="Oliver K."/>
            <person name="Palmeiri A."/>
            <person name="Palmer S.A."/>
            <person name="Parker A."/>
            <person name="Patel D."/>
            <person name="Pearce A.V."/>
            <person name="Peck A.I."/>
            <person name="Pelan S."/>
            <person name="Phelps K."/>
            <person name="Phillimore B.J."/>
            <person name="Plumb R."/>
            <person name="Rajan J."/>
            <person name="Raymond C."/>
            <person name="Rouse G."/>
            <person name="Saenphimmachak C."/>
            <person name="Sehra H.K."/>
            <person name="Sheridan E."/>
            <person name="Shownkeen R."/>
            <person name="Sims S."/>
            <person name="Skuce C.D."/>
            <person name="Smith M."/>
            <person name="Steward C."/>
            <person name="Subramanian S."/>
            <person name="Sycamore N."/>
            <person name="Tracey A."/>
            <person name="Tromans A."/>
            <person name="Van Helmond Z."/>
            <person name="Wall M."/>
            <person name="Wallis J.M."/>
            <person name="White S."/>
            <person name="Whitehead S.L."/>
            <person name="Wilkinson J.E."/>
            <person name="Willey D.L."/>
            <person name="Williams H."/>
            <person name="Wilming L."/>
            <person name="Wray P.W."/>
            <person name="Wu Z."/>
            <person name="Coulson A."/>
            <person name="Vaudin M."/>
            <person name="Sulston J.E."/>
            <person name="Durbin R.M."/>
            <person name="Hubbard T."/>
            <person name="Wooster R."/>
            <person name="Dunham I."/>
            <person name="Carter N.P."/>
            <person name="McVean G."/>
            <person name="Ross M.T."/>
            <person name="Harrow J."/>
            <person name="Olson M.V."/>
            <person name="Beck S."/>
            <person name="Rogers J."/>
            <person name="Bentley D.R."/>
        </authorList>
    </citation>
    <scope>NUCLEOTIDE SEQUENCE [LARGE SCALE GENOMIC DNA]</scope>
</reference>
<reference key="6">
    <citation type="submission" date="2005-09" db="EMBL/GenBank/DDBJ databases">
        <authorList>
            <person name="Mural R.J."/>
            <person name="Istrail S."/>
            <person name="Sutton G."/>
            <person name="Florea L."/>
            <person name="Halpern A.L."/>
            <person name="Mobarry C.M."/>
            <person name="Lippert R."/>
            <person name="Walenz B."/>
            <person name="Shatkay H."/>
            <person name="Dew I."/>
            <person name="Miller J.R."/>
            <person name="Flanigan M.J."/>
            <person name="Edwards N.J."/>
            <person name="Bolanos R."/>
            <person name="Fasulo D."/>
            <person name="Halldorsson B.V."/>
            <person name="Hannenhalli S."/>
            <person name="Turner R."/>
            <person name="Yooseph S."/>
            <person name="Lu F."/>
            <person name="Nusskern D.R."/>
            <person name="Shue B.C."/>
            <person name="Zheng X.H."/>
            <person name="Zhong F."/>
            <person name="Delcher A.L."/>
            <person name="Huson D.H."/>
            <person name="Kravitz S.A."/>
            <person name="Mouchard L."/>
            <person name="Reinert K."/>
            <person name="Remington K.A."/>
            <person name="Clark A.G."/>
            <person name="Waterman M.S."/>
            <person name="Eichler E.E."/>
            <person name="Adams M.D."/>
            <person name="Hunkapiller M.W."/>
            <person name="Myers E.W."/>
            <person name="Venter J.C."/>
        </authorList>
    </citation>
    <scope>NUCLEOTIDE SEQUENCE [LARGE SCALE GENOMIC DNA]</scope>
</reference>
<reference key="7">
    <citation type="journal article" date="2004" name="Genome Res.">
        <title>The status, quality, and expansion of the NIH full-length cDNA project: the Mammalian Gene Collection (MGC).</title>
        <authorList>
            <consortium name="The MGC Project Team"/>
        </authorList>
    </citation>
    <scope>NUCLEOTIDE SEQUENCE [LARGE SCALE MRNA] (ISOFORM 1)</scope>
    <source>
        <tissue>Brain</tissue>
    </source>
</reference>
<reference key="8">
    <citation type="journal article" date="2000" name="Curr. Biol.">
        <title>Phosphorylation and activation of heart PFK-2 by AMPK has a role in the stimulation of glycolysis during ischaemia.</title>
        <authorList>
            <person name="Marsin A.S."/>
            <person name="Bertrand L."/>
            <person name="Rider M.H."/>
            <person name="Deprez J."/>
            <person name="Beauloye C."/>
            <person name="Vincent M.F."/>
            <person name="Van den Berghe G."/>
            <person name="Carling D."/>
            <person name="Hue L."/>
        </authorList>
    </citation>
    <scope>PHOSPHORYLATION AT SER-466</scope>
    <scope>MUTAGENESIS OF SER-466</scope>
    <scope>CATALYTIC ACTIVITY</scope>
    <scope>FUNCTION</scope>
    <scope>BIOPHYSICOCHEMICAL PROPERTIES</scope>
</reference>
<reference key="9">
    <citation type="journal article" date="2008" name="Proc. Natl. Acad. Sci. U.S.A.">
        <title>A quantitative atlas of mitotic phosphorylation.</title>
        <authorList>
            <person name="Dephoure N."/>
            <person name="Zhou C."/>
            <person name="Villen J."/>
            <person name="Beausoleil S.A."/>
            <person name="Bakalarski C.E."/>
            <person name="Elledge S.J."/>
            <person name="Gygi S.P."/>
        </authorList>
    </citation>
    <scope>PHOSPHORYLATION [LARGE SCALE ANALYSIS] AT SER-466; THR-468; SER-483 AND SER-493</scope>
    <scope>IDENTIFICATION BY MASS SPECTROMETRY [LARGE SCALE ANALYSIS]</scope>
    <source>
        <tissue>Cervix carcinoma</tissue>
    </source>
</reference>
<reference key="10">
    <citation type="journal article" date="2009" name="Anal. Chem.">
        <title>Lys-N and trypsin cover complementary parts of the phosphoproteome in a refined SCX-based approach.</title>
        <authorList>
            <person name="Gauci S."/>
            <person name="Helbig A.O."/>
            <person name="Slijper M."/>
            <person name="Krijgsveld J."/>
            <person name="Heck A.J."/>
            <person name="Mohammed S."/>
        </authorList>
    </citation>
    <scope>ACETYLATION [LARGE SCALE ANALYSIS] AT SER-2</scope>
    <scope>CLEAVAGE OF INITIATOR METHIONINE [LARGE SCALE ANALYSIS]</scope>
    <scope>IDENTIFICATION BY MASS SPECTROMETRY [LARGE SCALE ANALYSIS]</scope>
</reference>
<reference key="11">
    <citation type="journal article" date="2009" name="Sci. Signal.">
        <title>Quantitative phosphoproteomic analysis of T cell receptor signaling reveals system-wide modulation of protein-protein interactions.</title>
        <authorList>
            <person name="Mayya V."/>
            <person name="Lundgren D.H."/>
            <person name="Hwang S.-I."/>
            <person name="Rezaul K."/>
            <person name="Wu L."/>
            <person name="Eng J.K."/>
            <person name="Rodionov V."/>
            <person name="Han D.K."/>
        </authorList>
    </citation>
    <scope>IDENTIFICATION BY MASS SPECTROMETRY [LARGE SCALE ANALYSIS]</scope>
    <source>
        <tissue>Leukemic T-cell</tissue>
    </source>
</reference>
<reference key="12">
    <citation type="journal article" date="2010" name="Sci. Signal.">
        <title>Quantitative phosphoproteomics reveals widespread full phosphorylation site occupancy during mitosis.</title>
        <authorList>
            <person name="Olsen J.V."/>
            <person name="Vermeulen M."/>
            <person name="Santamaria A."/>
            <person name="Kumar C."/>
            <person name="Miller M.L."/>
            <person name="Jensen L.J."/>
            <person name="Gnad F."/>
            <person name="Cox J."/>
            <person name="Jensen T.S."/>
            <person name="Nigg E.A."/>
            <person name="Brunak S."/>
            <person name="Mann M."/>
        </authorList>
    </citation>
    <scope>PHOSPHORYLATION [LARGE SCALE ANALYSIS] AT SER-466; SER-483 AND SER-493</scope>
    <scope>IDENTIFICATION BY MASS SPECTROMETRY [LARGE SCALE ANALYSIS]</scope>
    <source>
        <tissue>Cervix carcinoma</tissue>
    </source>
</reference>
<reference key="13">
    <citation type="journal article" date="2011" name="Sci. Signal.">
        <title>System-wide temporal characterization of the proteome and phosphoproteome of human embryonic stem cell differentiation.</title>
        <authorList>
            <person name="Rigbolt K.T."/>
            <person name="Prokhorova T.A."/>
            <person name="Akimov V."/>
            <person name="Henningsen J."/>
            <person name="Johansen P.T."/>
            <person name="Kratchmarova I."/>
            <person name="Kassem M."/>
            <person name="Mann M."/>
            <person name="Olsen J.V."/>
            <person name="Blagoev B."/>
        </authorList>
    </citation>
    <scope>PHOSPHORYLATION [LARGE SCALE ANALYSIS] AT SER-466</scope>
    <scope>IDENTIFICATION BY MASS SPECTROMETRY [LARGE SCALE ANALYSIS]</scope>
</reference>
<reference key="14">
    <citation type="journal article" date="2012" name="Proc. Natl. Acad. Sci. U.S.A.">
        <title>N-terminal acetylome analyses and functional insights of the N-terminal acetyltransferase NatB.</title>
        <authorList>
            <person name="Van Damme P."/>
            <person name="Lasa M."/>
            <person name="Polevoda B."/>
            <person name="Gazquez C."/>
            <person name="Elosegui-Artola A."/>
            <person name="Kim D.S."/>
            <person name="De Juan-Pardo E."/>
            <person name="Demeyer K."/>
            <person name="Hole K."/>
            <person name="Larrea E."/>
            <person name="Timmerman E."/>
            <person name="Prieto J."/>
            <person name="Arnesen T."/>
            <person name="Sherman F."/>
            <person name="Gevaert K."/>
            <person name="Aldabe R."/>
        </authorList>
    </citation>
    <scope>ACETYLATION [LARGE SCALE ANALYSIS] AT SER-2</scope>
    <scope>CLEAVAGE OF INITIATOR METHIONINE [LARGE SCALE ANALYSIS]</scope>
    <scope>IDENTIFICATION BY MASS SPECTROMETRY [LARGE SCALE ANALYSIS]</scope>
</reference>
<reference key="15">
    <citation type="journal article" date="2013" name="J. Proteome Res.">
        <title>Toward a comprehensive characterization of a human cancer cell phosphoproteome.</title>
        <authorList>
            <person name="Zhou H."/>
            <person name="Di Palma S."/>
            <person name="Preisinger C."/>
            <person name="Peng M."/>
            <person name="Polat A.N."/>
            <person name="Heck A.J."/>
            <person name="Mohammed S."/>
        </authorList>
    </citation>
    <scope>PHOSPHORYLATION [LARGE SCALE ANALYSIS] AT SER-466; THR-475 AND SER-493</scope>
    <scope>IDENTIFICATION BY MASS SPECTROMETRY [LARGE SCALE ANALYSIS]</scope>
    <source>
        <tissue>Cervix carcinoma</tissue>
        <tissue>Erythroleukemia</tissue>
    </source>
</reference>
<reference key="16">
    <citation type="journal article" date="2014" name="J. Proteomics">
        <title>An enzyme assisted RP-RPLC approach for in-depth analysis of human liver phosphoproteome.</title>
        <authorList>
            <person name="Bian Y."/>
            <person name="Song C."/>
            <person name="Cheng K."/>
            <person name="Dong M."/>
            <person name="Wang F."/>
            <person name="Huang J."/>
            <person name="Sun D."/>
            <person name="Wang L."/>
            <person name="Ye M."/>
            <person name="Zou H."/>
        </authorList>
    </citation>
    <scope>IDENTIFICATION BY MASS SPECTROMETRY [LARGE SCALE ANALYSIS]</scope>
    <source>
        <tissue>Liver</tissue>
    </source>
</reference>
<reference key="17">
    <citation type="journal article" date="2022" name="Nat. Commun.">
        <title>BRAF activation by metabolic stress promotes glycolysis sensitizing NRASQ61-mutated melanomas to targeted therapy.</title>
        <authorList>
            <person name="McGrail K."/>
            <person name="Granado-Martinez P."/>
            <person name="Esteve-Puig R."/>
            <person name="Garcia-Ortega S."/>
            <person name="Ding Y."/>
            <person name="Sanchez-Redondo S."/>
            <person name="Ferrer B."/>
            <person name="Hernandez-Losa J."/>
            <person name="Canals F."/>
            <person name="Manzano A."/>
            <person name="Navarro-Sabate A."/>
            <person name="Bartrons R."/>
            <person name="Yanes O."/>
            <person name="Perez-Alea M."/>
            <person name="Munoz-Couselo E."/>
            <person name="Garcia-Patos V."/>
            <person name="Recio J.A."/>
        </authorList>
    </citation>
    <scope>INTERACTION WITH PFKFB3</scope>
    <scope>PHOSPHORYLATION AT SER-466; THR-468; SER-483; SER-486 AND SER-493</scope>
</reference>
<gene>
    <name evidence="13" type="primary">PFKFB2</name>
</gene>
<sequence length="505" mass="58477">MSGASSSEQNNNSYETKTPNLRMSEKKCSWASYMTNSPTLIVMIGLPARGKTYVSKKLTRYLNWIGVPTKVFNLGVYRREAVKSYKSYDFFRHDNEEAMKIRKQCALVALEDVKAYLTEENGQIAVFDATNTTRERRDMILNFAEQNSFKVFFVESVCDDPDVIAANILEVKVSSPDYPERNRENVMEDFLKRIECYKVTYRPLDPDNYDKDLSFIKVINVGQRFLVNRVQDYIQSKIVYYLMNIHVQPRTIYLCRHGESEFNLLGKIGGDSGLSVRGKQFAQALRKFLEEQEITDLKVWTSQLKRTIQTAESLGVPYEQWKILNEIDAGVCEEMTYAEIEKRYPEEFALRDQEKYLYRYPGGESYQDLVQRLEPVIMELERQGNVLVISHQAVMRCLLAYFLDKGADELPYLRCPLHTIFKLTPVAYGCKVETIKLNVEAVNTHRDKPTNNFPKNQTPVRMRRNSFTPLSSSNTIRRPRNYSVGSRPLKPLSPLRAQDMQEGAD</sequence>
<dbReference type="EC" id="2.7.1.105" evidence="6"/>
<dbReference type="EC" id="3.1.3.46" evidence="6"/>
<dbReference type="EMBL" id="AJ005577">
    <property type="protein sequence ID" value="CAA06605.1"/>
    <property type="molecule type" value="Genomic_DNA"/>
</dbReference>
<dbReference type="EMBL" id="AJ005578">
    <property type="protein sequence ID" value="CAA06606.1"/>
    <property type="molecule type" value="mRNA"/>
</dbReference>
<dbReference type="EMBL" id="AB044805">
    <property type="protein sequence ID" value="BAB19681.1"/>
    <property type="molecule type" value="mRNA"/>
</dbReference>
<dbReference type="EMBL" id="AF470623">
    <property type="protein sequence ID" value="AAL99386.1"/>
    <property type="molecule type" value="mRNA"/>
</dbReference>
<dbReference type="EMBL" id="AK292883">
    <property type="protein sequence ID" value="BAF85572.1"/>
    <property type="molecule type" value="mRNA"/>
</dbReference>
<dbReference type="EMBL" id="AL445493">
    <property type="status" value="NOT_ANNOTATED_CDS"/>
    <property type="molecule type" value="Genomic_DNA"/>
</dbReference>
<dbReference type="EMBL" id="CH471100">
    <property type="protein sequence ID" value="EAW93508.1"/>
    <property type="molecule type" value="Genomic_DNA"/>
</dbReference>
<dbReference type="EMBL" id="BC069350">
    <property type="protein sequence ID" value="AAH69350.1"/>
    <property type="molecule type" value="mRNA"/>
</dbReference>
<dbReference type="EMBL" id="BC069385">
    <property type="protein sequence ID" value="AAH69385.1"/>
    <property type="molecule type" value="mRNA"/>
</dbReference>
<dbReference type="EMBL" id="BC069583">
    <property type="protein sequence ID" value="AAH69583.1"/>
    <property type="molecule type" value="mRNA"/>
</dbReference>
<dbReference type="EMBL" id="BC069586">
    <property type="protein sequence ID" value="AAH69586.1"/>
    <property type="molecule type" value="mRNA"/>
</dbReference>
<dbReference type="EMBL" id="BC069600">
    <property type="protein sequence ID" value="AAH69600.1"/>
    <property type="molecule type" value="mRNA"/>
</dbReference>
<dbReference type="EMBL" id="BC075075">
    <property type="protein sequence ID" value="AAH75075.1"/>
    <property type="molecule type" value="mRNA"/>
</dbReference>
<dbReference type="EMBL" id="BC075076">
    <property type="protein sequence ID" value="AAH75076.1"/>
    <property type="molecule type" value="mRNA"/>
</dbReference>
<dbReference type="EMBL" id="BC112103">
    <property type="protein sequence ID" value="AAI12104.1"/>
    <property type="molecule type" value="mRNA"/>
</dbReference>
<dbReference type="EMBL" id="BC112105">
    <property type="protein sequence ID" value="AAI12106.1"/>
    <property type="molecule type" value="mRNA"/>
</dbReference>
<dbReference type="CCDS" id="CCDS31003.1">
    <molecule id="O60825-2"/>
</dbReference>
<dbReference type="CCDS" id="CCDS31004.1">
    <molecule id="O60825-1"/>
</dbReference>
<dbReference type="RefSeq" id="NP_001018063.1">
    <molecule id="O60825-2"/>
    <property type="nucleotide sequence ID" value="NM_001018053.2"/>
</dbReference>
<dbReference type="RefSeq" id="NP_006203.2">
    <molecule id="O60825-1"/>
    <property type="nucleotide sequence ID" value="NM_006212.2"/>
</dbReference>
<dbReference type="RefSeq" id="XP_024303422.1">
    <molecule id="O60825-1"/>
    <property type="nucleotide sequence ID" value="XM_024447654.2"/>
</dbReference>
<dbReference type="RefSeq" id="XP_024303423.1">
    <molecule id="O60825-1"/>
    <property type="nucleotide sequence ID" value="XM_024447655.2"/>
</dbReference>
<dbReference type="RefSeq" id="XP_024303425.1">
    <molecule id="O60825-2"/>
    <property type="nucleotide sequence ID" value="XM_024447657.2"/>
</dbReference>
<dbReference type="RefSeq" id="XP_047278503.1">
    <molecule id="O60825-1"/>
    <property type="nucleotide sequence ID" value="XM_047422547.1"/>
</dbReference>
<dbReference type="RefSeq" id="XP_047278504.1">
    <molecule id="O60825-1"/>
    <property type="nucleotide sequence ID" value="XM_047422548.1"/>
</dbReference>
<dbReference type="RefSeq" id="XP_047278505.1">
    <molecule id="O60825-2"/>
    <property type="nucleotide sequence ID" value="XM_047422549.1"/>
</dbReference>
<dbReference type="RefSeq" id="XP_054192998.1">
    <molecule id="O60825-1"/>
    <property type="nucleotide sequence ID" value="XM_054337023.1"/>
</dbReference>
<dbReference type="RefSeq" id="XP_054192999.1">
    <molecule id="O60825-1"/>
    <property type="nucleotide sequence ID" value="XM_054337024.1"/>
</dbReference>
<dbReference type="RefSeq" id="XP_054193000.1">
    <molecule id="O60825-1"/>
    <property type="nucleotide sequence ID" value="XM_054337025.1"/>
</dbReference>
<dbReference type="RefSeq" id="XP_054193001.1">
    <molecule id="O60825-1"/>
    <property type="nucleotide sequence ID" value="XM_054337026.1"/>
</dbReference>
<dbReference type="RefSeq" id="XP_054193003.1">
    <molecule id="O60825-2"/>
    <property type="nucleotide sequence ID" value="XM_054337028.1"/>
</dbReference>
<dbReference type="RefSeq" id="XP_054193004.1">
    <molecule id="O60825-2"/>
    <property type="nucleotide sequence ID" value="XM_054337029.1"/>
</dbReference>
<dbReference type="PDB" id="5HTK">
    <property type="method" value="X-ray"/>
    <property type="resolution" value="2.01 A"/>
    <property type="chains" value="A/B=1-505"/>
</dbReference>
<dbReference type="PDBsum" id="5HTK"/>
<dbReference type="SMR" id="O60825"/>
<dbReference type="BioGRID" id="111229">
    <property type="interactions" value="60"/>
</dbReference>
<dbReference type="ComplexPortal" id="CPX-1994">
    <property type="entry name" value="6-phosphofructo-2-kinase/fructose-2,6-biphosphatase 2 complex"/>
</dbReference>
<dbReference type="FunCoup" id="O60825">
    <property type="interactions" value="2692"/>
</dbReference>
<dbReference type="IntAct" id="O60825">
    <property type="interactions" value="35"/>
</dbReference>
<dbReference type="MINT" id="O60825"/>
<dbReference type="STRING" id="9606.ENSP00000356047"/>
<dbReference type="BindingDB" id="O60825"/>
<dbReference type="ChEMBL" id="CHEMBL3421525"/>
<dbReference type="DEPOD" id="PFKFB2"/>
<dbReference type="GlyGen" id="O60825">
    <property type="glycosylation" value="4 sites, 1 N-linked glycan (1 site), 1 O-linked glycan (3 sites)"/>
</dbReference>
<dbReference type="iPTMnet" id="O60825"/>
<dbReference type="PhosphoSitePlus" id="O60825"/>
<dbReference type="BioMuta" id="PFKFB2"/>
<dbReference type="jPOST" id="O60825"/>
<dbReference type="MassIVE" id="O60825"/>
<dbReference type="PaxDb" id="9606-ENSP00000356047"/>
<dbReference type="PeptideAtlas" id="O60825"/>
<dbReference type="ProteomicsDB" id="49608">
    <molecule id="O60825-1"/>
</dbReference>
<dbReference type="ProteomicsDB" id="49609">
    <molecule id="O60825-2"/>
</dbReference>
<dbReference type="Pumba" id="O60825"/>
<dbReference type="Antibodypedia" id="34592">
    <property type="antibodies" value="429 antibodies from 37 providers"/>
</dbReference>
<dbReference type="DNASU" id="5208"/>
<dbReference type="Ensembl" id="ENST00000367079.3">
    <molecule id="O60825-2"/>
    <property type="protein sequence ID" value="ENSP00000356046.2"/>
    <property type="gene ID" value="ENSG00000123836.15"/>
</dbReference>
<dbReference type="Ensembl" id="ENST00000367080.8">
    <molecule id="O60825-1"/>
    <property type="protein sequence ID" value="ENSP00000356047.3"/>
    <property type="gene ID" value="ENSG00000123836.15"/>
</dbReference>
<dbReference type="GeneID" id="5208"/>
<dbReference type="KEGG" id="hsa:5208"/>
<dbReference type="MANE-Select" id="ENST00000367080.8">
    <property type="protein sequence ID" value="ENSP00000356047.3"/>
    <property type="RefSeq nucleotide sequence ID" value="NM_006212.2"/>
    <property type="RefSeq protein sequence ID" value="NP_006203.2"/>
</dbReference>
<dbReference type="UCSC" id="uc001hfg.4">
    <molecule id="O60825-1"/>
    <property type="organism name" value="human"/>
</dbReference>
<dbReference type="AGR" id="HGNC:8873"/>
<dbReference type="CTD" id="5208"/>
<dbReference type="DisGeNET" id="5208"/>
<dbReference type="GeneCards" id="PFKFB2"/>
<dbReference type="HGNC" id="HGNC:8873">
    <property type="gene designation" value="PFKFB2"/>
</dbReference>
<dbReference type="HPA" id="ENSG00000123836">
    <property type="expression patterns" value="Tissue enhanced (retina)"/>
</dbReference>
<dbReference type="MIM" id="171835">
    <property type="type" value="gene"/>
</dbReference>
<dbReference type="neXtProt" id="NX_O60825"/>
<dbReference type="OpenTargets" id="ENSG00000123836"/>
<dbReference type="PharmGKB" id="PA33212"/>
<dbReference type="VEuPathDB" id="HostDB:ENSG00000123836"/>
<dbReference type="eggNOG" id="KOG0234">
    <property type="taxonomic scope" value="Eukaryota"/>
</dbReference>
<dbReference type="GeneTree" id="ENSGT00950000182835"/>
<dbReference type="HOGENOM" id="CLU_006383_1_1_1"/>
<dbReference type="InParanoid" id="O60825"/>
<dbReference type="OMA" id="RWIQERC"/>
<dbReference type="OrthoDB" id="267323at2759"/>
<dbReference type="PAN-GO" id="O60825">
    <property type="GO annotations" value="4 GO annotations based on evolutionary models"/>
</dbReference>
<dbReference type="PhylomeDB" id="O60825"/>
<dbReference type="TreeFam" id="TF313541"/>
<dbReference type="BioCyc" id="MetaCyc:HS04690-MONOMER"/>
<dbReference type="BRENDA" id="2.7.1.105">
    <property type="organism ID" value="2681"/>
</dbReference>
<dbReference type="BRENDA" id="3.1.3.46">
    <property type="organism ID" value="2681"/>
</dbReference>
<dbReference type="PathwayCommons" id="O60825"/>
<dbReference type="Reactome" id="R-HSA-9634600">
    <property type="pathway name" value="Regulation of glycolysis by fructose 2,6-bisphosphate metabolism"/>
</dbReference>
<dbReference type="SABIO-RK" id="O60825"/>
<dbReference type="SignaLink" id="O60825"/>
<dbReference type="SIGNOR" id="O60825"/>
<dbReference type="BioGRID-ORCS" id="5208">
    <property type="hits" value="11 hits in 1170 CRISPR screens"/>
</dbReference>
<dbReference type="ChiTaRS" id="PFKFB2">
    <property type="organism name" value="human"/>
</dbReference>
<dbReference type="GeneWiki" id="PFKFB2"/>
<dbReference type="GenomeRNAi" id="5208"/>
<dbReference type="Pharos" id="O60825">
    <property type="development level" value="Tchem"/>
</dbReference>
<dbReference type="PRO" id="PR:O60825"/>
<dbReference type="Proteomes" id="UP000005640">
    <property type="component" value="Chromosome 1"/>
</dbReference>
<dbReference type="RNAct" id="O60825">
    <property type="molecule type" value="protein"/>
</dbReference>
<dbReference type="Bgee" id="ENSG00000123836">
    <property type="expression patterns" value="Expressed in islet of Langerhans and 187 other cell types or tissues"/>
</dbReference>
<dbReference type="ExpressionAtlas" id="O60825">
    <property type="expression patterns" value="baseline and differential"/>
</dbReference>
<dbReference type="GO" id="GO:0005829">
    <property type="term" value="C:cytosol"/>
    <property type="evidence" value="ECO:0000318"/>
    <property type="project" value="GO_Central"/>
</dbReference>
<dbReference type="GO" id="GO:0005654">
    <property type="term" value="C:nucleoplasm"/>
    <property type="evidence" value="ECO:0000314"/>
    <property type="project" value="HPA"/>
</dbReference>
<dbReference type="GO" id="GO:0003873">
    <property type="term" value="F:6-phosphofructo-2-kinase activity"/>
    <property type="evidence" value="ECO:0000314"/>
    <property type="project" value="UniProtKB"/>
</dbReference>
<dbReference type="GO" id="GO:0005524">
    <property type="term" value="F:ATP binding"/>
    <property type="evidence" value="ECO:0007669"/>
    <property type="project" value="UniProtKB-KW"/>
</dbReference>
<dbReference type="GO" id="GO:0004331">
    <property type="term" value="F:fructose-2,6-bisphosphate 2-phosphatase activity"/>
    <property type="evidence" value="ECO:0000318"/>
    <property type="project" value="GO_Central"/>
</dbReference>
<dbReference type="GO" id="GO:0019901">
    <property type="term" value="F:protein kinase binding"/>
    <property type="evidence" value="ECO:0000353"/>
    <property type="project" value="UniProtKB"/>
</dbReference>
<dbReference type="GO" id="GO:0006003">
    <property type="term" value="P:fructose 2,6-bisphosphate metabolic process"/>
    <property type="evidence" value="ECO:0000318"/>
    <property type="project" value="GO_Central"/>
</dbReference>
<dbReference type="GO" id="GO:0006000">
    <property type="term" value="P:fructose metabolic process"/>
    <property type="evidence" value="ECO:0000304"/>
    <property type="project" value="ProtInc"/>
</dbReference>
<dbReference type="GO" id="GO:0006007">
    <property type="term" value="P:glucose catabolic process"/>
    <property type="evidence" value="ECO:0007669"/>
    <property type="project" value="Ensembl"/>
</dbReference>
<dbReference type="GO" id="GO:0006096">
    <property type="term" value="P:glycolytic process"/>
    <property type="evidence" value="ECO:0000314"/>
    <property type="project" value="UniProtKB"/>
</dbReference>
<dbReference type="GO" id="GO:0006089">
    <property type="term" value="P:lactate metabolic process"/>
    <property type="evidence" value="ECO:0007669"/>
    <property type="project" value="Ensembl"/>
</dbReference>
<dbReference type="GO" id="GO:0032024">
    <property type="term" value="P:positive regulation of insulin secretion"/>
    <property type="evidence" value="ECO:0007669"/>
    <property type="project" value="Ensembl"/>
</dbReference>
<dbReference type="GO" id="GO:0009749">
    <property type="term" value="P:response to glucose"/>
    <property type="evidence" value="ECO:0007669"/>
    <property type="project" value="Ensembl"/>
</dbReference>
<dbReference type="CDD" id="cd07067">
    <property type="entry name" value="HP_PGM_like"/>
    <property type="match status" value="1"/>
</dbReference>
<dbReference type="FunFam" id="3.40.50.1240:FF:000001">
    <property type="entry name" value="6-phosphofructo-2-kinase/fructose-2, 6-bisphosphatase 3 isoform 2"/>
    <property type="match status" value="1"/>
</dbReference>
<dbReference type="FunFam" id="3.40.50.300:FF:000047">
    <property type="entry name" value="6-phosphofructo-2-kinase/fructose-2, 6-bisphosphatase 3 isoform 2"/>
    <property type="match status" value="1"/>
</dbReference>
<dbReference type="Gene3D" id="3.40.50.300">
    <property type="entry name" value="P-loop containing nucleotide triphosphate hydrolases"/>
    <property type="match status" value="1"/>
</dbReference>
<dbReference type="Gene3D" id="3.40.50.1240">
    <property type="entry name" value="Phosphoglycerate mutase-like"/>
    <property type="match status" value="1"/>
</dbReference>
<dbReference type="InterPro" id="IPR003094">
    <property type="entry name" value="6Pfruct_kin"/>
</dbReference>
<dbReference type="InterPro" id="IPR013079">
    <property type="entry name" value="6Phosfructo_kin"/>
</dbReference>
<dbReference type="InterPro" id="IPR013078">
    <property type="entry name" value="His_Pase_superF_clade-1"/>
</dbReference>
<dbReference type="InterPro" id="IPR029033">
    <property type="entry name" value="His_PPase_superfam"/>
</dbReference>
<dbReference type="InterPro" id="IPR027417">
    <property type="entry name" value="P-loop_NTPase"/>
</dbReference>
<dbReference type="InterPro" id="IPR001345">
    <property type="entry name" value="PG/BPGM_mutase_AS"/>
</dbReference>
<dbReference type="PANTHER" id="PTHR10606">
    <property type="entry name" value="6-PHOSPHOFRUCTO-2-KINASE/FRUCTOSE-2,6-BISPHOSPHATASE"/>
    <property type="match status" value="1"/>
</dbReference>
<dbReference type="PANTHER" id="PTHR10606:SF48">
    <property type="entry name" value="6-PHOSPHOFRUCTO-2-KINASE_FRUCTOSE-2,6-BISPHOSPHATASE 2"/>
    <property type="match status" value="1"/>
</dbReference>
<dbReference type="Pfam" id="PF01591">
    <property type="entry name" value="6PF2K"/>
    <property type="match status" value="1"/>
</dbReference>
<dbReference type="Pfam" id="PF00300">
    <property type="entry name" value="His_Phos_1"/>
    <property type="match status" value="1"/>
</dbReference>
<dbReference type="PIRSF" id="PIRSF000709">
    <property type="entry name" value="6PFK_2-Ptase"/>
    <property type="match status" value="1"/>
</dbReference>
<dbReference type="PRINTS" id="PR00991">
    <property type="entry name" value="6PFRUCTKNASE"/>
</dbReference>
<dbReference type="SMART" id="SM00855">
    <property type="entry name" value="PGAM"/>
    <property type="match status" value="1"/>
</dbReference>
<dbReference type="SUPFAM" id="SSF52540">
    <property type="entry name" value="P-loop containing nucleoside triphosphate hydrolases"/>
    <property type="match status" value="1"/>
</dbReference>
<dbReference type="SUPFAM" id="SSF53254">
    <property type="entry name" value="Phosphoglycerate mutase-like"/>
    <property type="match status" value="1"/>
</dbReference>
<dbReference type="PROSITE" id="PS00175">
    <property type="entry name" value="PG_MUTASE"/>
    <property type="match status" value="1"/>
</dbReference>
<comment type="function">
    <text evidence="6">Synthesis and degradation of fructose 2,6-bisphosphate.</text>
</comment>
<comment type="catalytic activity">
    <reaction evidence="6">
        <text>beta-D-fructose 2,6-bisphosphate + H2O = beta-D-fructose 6-phosphate + phosphate</text>
        <dbReference type="Rhea" id="RHEA:17289"/>
        <dbReference type="ChEBI" id="CHEBI:15377"/>
        <dbReference type="ChEBI" id="CHEBI:43474"/>
        <dbReference type="ChEBI" id="CHEBI:57634"/>
        <dbReference type="ChEBI" id="CHEBI:58579"/>
        <dbReference type="EC" id="3.1.3.46"/>
    </reaction>
    <physiologicalReaction direction="left-to-right" evidence="12">
        <dbReference type="Rhea" id="RHEA:17290"/>
    </physiologicalReaction>
</comment>
<comment type="catalytic activity">
    <reaction evidence="6">
        <text>beta-D-fructose 6-phosphate + ATP = beta-D-fructose 2,6-bisphosphate + ADP + H(+)</text>
        <dbReference type="Rhea" id="RHEA:15653"/>
        <dbReference type="ChEBI" id="CHEBI:15378"/>
        <dbReference type="ChEBI" id="CHEBI:30616"/>
        <dbReference type="ChEBI" id="CHEBI:57634"/>
        <dbReference type="ChEBI" id="CHEBI:58579"/>
        <dbReference type="ChEBI" id="CHEBI:456216"/>
        <dbReference type="EC" id="2.7.1.105"/>
    </reaction>
    <physiologicalReaction direction="left-to-right" evidence="6">
        <dbReference type="Rhea" id="RHEA:15654"/>
    </physiologicalReaction>
</comment>
<comment type="activity regulation">
    <text evidence="6">Phosphorylation results in the activation of the kinase activity.</text>
</comment>
<comment type="biophysicochemical properties">
    <kinetics>
        <KM evidence="6">57 uM for beta-D-fructose 6-phosphate</KM>
        <KM evidence="6">5.1 uM for beta-D-fructose 2,6-bisphosphate</KM>
        <KM evidence="6">46 uM for beta-D-fructose 6-phosphate (in presence of AMPK)</KM>
        <KM evidence="6">29 uM for beta-D-fructose 6-phosphate (in presence of PKB)</KM>
        <KM evidence="6">4.7 uM for beta-D-fructose 2,6-bisphosphate (in presence of AMPK)</KM>
    </kinetics>
</comment>
<comment type="subunit">
    <text evidence="3 7">Homodimer (By similarity). Forms a heterodimer with PFKFB3 (PubMed:36402789).</text>
</comment>
<comment type="interaction">
    <interactant intactId="EBI-764425">
        <id>O60825</id>
    </interactant>
    <interactant intactId="EBI-347088">
        <id>P63104</id>
        <label>YWHAZ</label>
    </interactant>
    <organismsDiffer>false</organismsDiffer>
    <experiments>6</experiments>
</comment>
<comment type="alternative products">
    <event type="alternative splicing"/>
    <isoform>
        <id>O60825-1</id>
        <name>1</name>
        <sequence type="displayed"/>
    </isoform>
    <isoform>
        <id>O60825-2</id>
        <name>2</name>
        <sequence type="described" ref="VSP_004675"/>
    </isoform>
</comment>
<comment type="tissue specificity">
    <text>Heart.</text>
</comment>
<comment type="PTM">
    <text evidence="6">Phosphorylation by AMPK stimulates activity.</text>
</comment>
<comment type="similarity">
    <text evidence="11">In the C-terminal section; belongs to the phosphoglycerate mutase family.</text>
</comment>
<protein>
    <recommendedName>
        <fullName evidence="11">6-phosphofructo-2-kinase/fructose-2,6-bisphosphatase 2</fullName>
        <shortName>6PF-2-K/Fru-2,6-P2ase 2</shortName>
        <shortName>PFK/FBPase 2</shortName>
    </recommendedName>
    <alternativeName>
        <fullName>6PF-2-K/Fru-2,6-P2ase heart-type isozyme</fullName>
    </alternativeName>
    <domain>
        <recommendedName>
            <fullName>6-phosphofructo-2-kinase</fullName>
            <ecNumber evidence="6">2.7.1.105</ecNumber>
        </recommendedName>
    </domain>
    <domain>
        <recommendedName>
            <fullName>Fructose-2,6-bisphosphatase</fullName>
            <ecNumber evidence="6">3.1.3.46</ecNumber>
        </recommendedName>
    </domain>
</protein>
<organism>
    <name type="scientific">Homo sapiens</name>
    <name type="common">Human</name>
    <dbReference type="NCBI Taxonomy" id="9606"/>
    <lineage>
        <taxon>Eukaryota</taxon>
        <taxon>Metazoa</taxon>
        <taxon>Chordata</taxon>
        <taxon>Craniata</taxon>
        <taxon>Vertebrata</taxon>
        <taxon>Euteleostomi</taxon>
        <taxon>Mammalia</taxon>
        <taxon>Eutheria</taxon>
        <taxon>Euarchontoglires</taxon>
        <taxon>Primates</taxon>
        <taxon>Haplorrhini</taxon>
        <taxon>Catarrhini</taxon>
        <taxon>Hominidae</taxon>
        <taxon>Homo</taxon>
    </lineage>
</organism>
<name>F262_HUMAN</name>
<proteinExistence type="evidence at protein level"/>
<feature type="initiator methionine" description="Removed" evidence="15 18">
    <location>
        <position position="1"/>
    </location>
</feature>
<feature type="chain" id="PRO_0000179964" description="6-phosphofructo-2-kinase/fructose-2,6-bisphosphatase 2">
    <location>
        <begin position="2"/>
        <end position="505"/>
    </location>
</feature>
<feature type="region of interest" description="Disordered" evidence="5">
    <location>
        <begin position="1"/>
        <end position="20"/>
    </location>
</feature>
<feature type="region of interest" description="6-phosphofructo-2-kinase">
    <location>
        <begin position="2"/>
        <end position="248"/>
    </location>
</feature>
<feature type="region of interest" description="Fructose-2,6-bisphosphatase">
    <location>
        <begin position="249"/>
        <end position="505"/>
    </location>
</feature>
<feature type="region of interest" description="Disordered" evidence="5">
    <location>
        <begin position="445"/>
        <end position="505"/>
    </location>
</feature>
<feature type="compositionally biased region" description="Polar residues" evidence="5">
    <location>
        <begin position="450"/>
        <end position="476"/>
    </location>
</feature>
<feature type="active site" evidence="4">
    <location>
        <position position="128"/>
    </location>
</feature>
<feature type="active site" evidence="4">
    <location>
        <position position="158"/>
    </location>
</feature>
<feature type="active site" description="Tele-phosphohistidine intermediate" evidence="3">
    <location>
        <position position="257"/>
    </location>
</feature>
<feature type="active site" description="Proton donor/acceptor" evidence="3">
    <location>
        <position position="326"/>
    </location>
</feature>
<feature type="binding site" evidence="3">
    <location>
        <begin position="45"/>
        <end position="53"/>
    </location>
    <ligand>
        <name>ATP</name>
        <dbReference type="ChEBI" id="CHEBI:30616"/>
    </ligand>
</feature>
<feature type="binding site" evidence="3">
    <location>
        <position position="78"/>
    </location>
    <ligand>
        <name>beta-D-fructose 6-phosphate</name>
        <dbReference type="ChEBI" id="CHEBI:57634"/>
    </ligand>
</feature>
<feature type="binding site" evidence="3">
    <location>
        <position position="102"/>
    </location>
    <ligand>
        <name>beta-D-fructose 6-phosphate</name>
        <dbReference type="ChEBI" id="CHEBI:57634"/>
    </ligand>
</feature>
<feature type="binding site" evidence="3">
    <location>
        <position position="130"/>
    </location>
    <ligand>
        <name>beta-D-fructose 6-phosphate</name>
        <dbReference type="ChEBI" id="CHEBI:57634"/>
    </ligand>
</feature>
<feature type="binding site" evidence="3">
    <location>
        <position position="136"/>
    </location>
    <ligand>
        <name>beta-D-fructose 6-phosphate</name>
        <dbReference type="ChEBI" id="CHEBI:57634"/>
    </ligand>
</feature>
<feature type="binding site" evidence="3">
    <location>
        <begin position="167"/>
        <end position="172"/>
    </location>
    <ligand>
        <name>ATP</name>
        <dbReference type="ChEBI" id="CHEBI:30616"/>
    </ligand>
</feature>
<feature type="binding site" evidence="3">
    <location>
        <position position="172"/>
    </location>
    <ligand>
        <name>beta-D-fructose 6-phosphate</name>
        <dbReference type="ChEBI" id="CHEBI:57634"/>
    </ligand>
</feature>
<feature type="binding site" evidence="3">
    <location>
        <position position="193"/>
    </location>
    <ligand>
        <name>beta-D-fructose 6-phosphate</name>
        <dbReference type="ChEBI" id="CHEBI:57634"/>
    </ligand>
</feature>
<feature type="binding site" evidence="3">
    <location>
        <position position="197"/>
    </location>
    <ligand>
        <name>beta-D-fructose 6-phosphate</name>
        <dbReference type="ChEBI" id="CHEBI:57634"/>
    </ligand>
</feature>
<feature type="binding site" evidence="3">
    <location>
        <position position="256"/>
    </location>
    <ligand>
        <name>beta-D-fructose 2,6-bisphosphate</name>
        <dbReference type="ChEBI" id="CHEBI:58579"/>
    </ligand>
</feature>
<feature type="binding site" evidence="3">
    <location>
        <position position="263"/>
    </location>
    <ligand>
        <name>beta-D-fructose 2,6-bisphosphate</name>
        <dbReference type="ChEBI" id="CHEBI:58579"/>
    </ligand>
</feature>
<feature type="binding site" evidence="3">
    <location>
        <position position="269"/>
    </location>
    <ligand>
        <name>beta-D-fructose 2,6-bisphosphate</name>
        <dbReference type="ChEBI" id="CHEBI:58579"/>
    </ligand>
</feature>
<feature type="binding site" evidence="3">
    <location>
        <position position="337"/>
    </location>
    <ligand>
        <name>beta-D-fructose 2,6-bisphosphate</name>
        <dbReference type="ChEBI" id="CHEBI:58579"/>
    </ligand>
</feature>
<feature type="binding site" evidence="2">
    <location>
        <begin position="348"/>
        <end position="351"/>
    </location>
    <ligand>
        <name>ATP</name>
        <dbReference type="ChEBI" id="CHEBI:30616"/>
    </ligand>
</feature>
<feature type="binding site" evidence="3">
    <location>
        <position position="351"/>
    </location>
    <ligand>
        <name>beta-D-fructose 2,6-bisphosphate</name>
        <dbReference type="ChEBI" id="CHEBI:58579"/>
    </ligand>
</feature>
<feature type="binding site" evidence="3">
    <location>
        <position position="355"/>
    </location>
    <ligand>
        <name>beta-D-fructose 2,6-bisphosphate</name>
        <dbReference type="ChEBI" id="CHEBI:58579"/>
    </ligand>
</feature>
<feature type="binding site" evidence="3">
    <location>
        <position position="366"/>
    </location>
    <ligand>
        <name>beta-D-fructose 2,6-bisphosphate</name>
        <dbReference type="ChEBI" id="CHEBI:58579"/>
    </ligand>
</feature>
<feature type="binding site" evidence="2">
    <location>
        <begin position="392"/>
        <end position="396"/>
    </location>
    <ligand>
        <name>ATP</name>
        <dbReference type="ChEBI" id="CHEBI:30616"/>
    </ligand>
</feature>
<feature type="binding site" evidence="3">
    <location>
        <position position="392"/>
    </location>
    <ligand>
        <name>beta-D-fructose 2,6-bisphosphate</name>
        <dbReference type="ChEBI" id="CHEBI:58579"/>
    </ligand>
</feature>
<feature type="binding site" evidence="2">
    <location>
        <position position="396"/>
    </location>
    <ligand>
        <name>beta-D-fructose 2,6-bisphosphate</name>
        <dbReference type="ChEBI" id="CHEBI:58579"/>
    </ligand>
</feature>
<feature type="binding site" evidence="3">
    <location>
        <position position="428"/>
    </location>
    <ligand>
        <name>ATP</name>
        <dbReference type="ChEBI" id="CHEBI:30616"/>
    </ligand>
</feature>
<feature type="site" description="Transition state stabilizer" evidence="3">
    <location>
        <position position="256"/>
    </location>
</feature>
<feature type="site" description="Transition state stabilizer" evidence="3">
    <location>
        <position position="263"/>
    </location>
</feature>
<feature type="site" description="Transition state stabilizer" evidence="3">
    <location>
        <position position="391"/>
    </location>
</feature>
<feature type="modified residue" description="N-acetylserine" evidence="15 18">
    <location>
        <position position="2"/>
    </location>
</feature>
<feature type="modified residue" description="Phosphoserine; by PKA" evidence="1">
    <location>
        <position position="29"/>
    </location>
</feature>
<feature type="modified residue" description="Phosphoserine; by AMPK" evidence="6 7 14 16 17 19">
    <location>
        <position position="466"/>
    </location>
</feature>
<feature type="modified residue" description="Phosphothreonine" evidence="7 14">
    <location>
        <position position="468"/>
    </location>
</feature>
<feature type="modified residue" description="Phosphothreonine" evidence="19">
    <location>
        <position position="475"/>
    </location>
</feature>
<feature type="modified residue" description="Phosphoserine; by BRAF" evidence="7 14 16">
    <location>
        <position position="483"/>
    </location>
</feature>
<feature type="modified residue" description="Phosphoserine" evidence="7">
    <location>
        <position position="486"/>
    </location>
</feature>
<feature type="modified residue" description="Phosphoserine" evidence="7 14 16 19">
    <location>
        <position position="493"/>
    </location>
</feature>
<feature type="splice variant" id="VSP_004675" description="In isoform 2." evidence="8 9 10">
    <original>NNFPKNQTPVRMRRNSFTPLSSSNTIRRPRNYSVGSRPLKPLSPLRAQDMQEGAD</original>
    <variation>AAETTLAVRRRPSAASLMLPC</variation>
    <location>
        <begin position="451"/>
        <end position="505"/>
    </location>
</feature>
<feature type="mutagenesis site" description="Constitutively active mutant that cannot be phosphorylated and further activated by AMPK." evidence="6">
    <original>S</original>
    <variation>E</variation>
    <location>
        <position position="466"/>
    </location>
</feature>
<feature type="sequence conflict" description="In Ref. 1; CAA06605." evidence="11" ref="1">
    <location>
        <position position="28"/>
    </location>
</feature>
<feature type="sequence conflict" description="In Ref. 1; CAA06606." evidence="11" ref="1">
    <original>QL</original>
    <variation>HV</variation>
    <location>
        <begin position="303"/>
        <end position="304"/>
    </location>
</feature>
<feature type="sequence conflict" description="In Ref. 1; CAA06606." evidence="11" ref="1">
    <original>R</original>
    <variation>L</variation>
    <location>
        <position position="372"/>
    </location>
</feature>
<feature type="sequence conflict" description="In Ref. 1; CAA06606." evidence="11" ref="1">
    <original>R</original>
    <variation>H</variation>
    <location>
        <position position="396"/>
    </location>
</feature>
<feature type="sequence conflict" description="In Ref. 1; CAA06606." evidence="11" ref="1">
    <original>G</original>
    <variation>D</variation>
    <location>
        <position position="406"/>
    </location>
</feature>
<feature type="sequence conflict" description="In Ref. 1; CAA06606." evidence="11" ref="1">
    <original>A</original>
    <variation>T</variation>
    <location>
        <position position="427"/>
    </location>
</feature>
<feature type="strand" evidence="20">
    <location>
        <begin position="39"/>
        <end position="44"/>
    </location>
</feature>
<feature type="strand" evidence="20">
    <location>
        <begin position="47"/>
        <end position="50"/>
    </location>
</feature>
<feature type="helix" evidence="20">
    <location>
        <begin position="51"/>
        <end position="64"/>
    </location>
</feature>
<feature type="strand" evidence="20">
    <location>
        <begin position="69"/>
        <end position="73"/>
    </location>
</feature>
<feature type="helix" evidence="20">
    <location>
        <begin position="74"/>
        <end position="82"/>
    </location>
</feature>
<feature type="helix" evidence="20">
    <location>
        <begin position="88"/>
        <end position="91"/>
    </location>
</feature>
<feature type="helix" evidence="20">
    <location>
        <begin position="96"/>
        <end position="119"/>
    </location>
</feature>
<feature type="strand" evidence="20">
    <location>
        <begin position="123"/>
        <end position="129"/>
    </location>
</feature>
<feature type="helix" evidence="20">
    <location>
        <begin position="134"/>
        <end position="147"/>
    </location>
</feature>
<feature type="strand" evidence="20">
    <location>
        <begin position="150"/>
        <end position="157"/>
    </location>
</feature>
<feature type="helix" evidence="20">
    <location>
        <begin position="161"/>
        <end position="174"/>
    </location>
</feature>
<feature type="helix" evidence="20">
    <location>
        <begin position="186"/>
        <end position="200"/>
    </location>
</feature>
<feature type="turn" evidence="20">
    <location>
        <begin position="206"/>
        <end position="212"/>
    </location>
</feature>
<feature type="strand" evidence="20">
    <location>
        <begin position="215"/>
        <end position="219"/>
    </location>
</feature>
<feature type="turn" evidence="20">
    <location>
        <begin position="220"/>
        <end position="223"/>
    </location>
</feature>
<feature type="strand" evidence="20">
    <location>
        <begin position="224"/>
        <end position="228"/>
    </location>
</feature>
<feature type="helix" evidence="20">
    <location>
        <begin position="233"/>
        <end position="242"/>
    </location>
</feature>
<feature type="strand" evidence="20">
    <location>
        <begin position="252"/>
        <end position="256"/>
    </location>
</feature>
<feature type="helix" evidence="20">
    <location>
        <begin position="261"/>
        <end position="265"/>
    </location>
</feature>
<feature type="helix" evidence="20">
    <location>
        <begin position="276"/>
        <end position="292"/>
    </location>
</feature>
<feature type="strand" evidence="20">
    <location>
        <begin position="298"/>
        <end position="301"/>
    </location>
</feature>
<feature type="helix" evidence="20">
    <location>
        <begin position="305"/>
        <end position="312"/>
    </location>
</feature>
<feature type="helix" evidence="20">
    <location>
        <begin position="322"/>
        <end position="324"/>
    </location>
</feature>
<feature type="helix" evidence="20">
    <location>
        <begin position="330"/>
        <end position="332"/>
    </location>
</feature>
<feature type="helix" evidence="20">
    <location>
        <begin position="337"/>
        <end position="343"/>
    </location>
</feature>
<feature type="helix" evidence="20">
    <location>
        <begin position="345"/>
        <end position="353"/>
    </location>
</feature>
<feature type="turn" evidence="20">
    <location>
        <begin position="355"/>
        <end position="357"/>
    </location>
</feature>
<feature type="helix" evidence="20">
    <location>
        <begin position="366"/>
        <end position="382"/>
    </location>
</feature>
<feature type="strand" evidence="20">
    <location>
        <begin position="384"/>
        <end position="390"/>
    </location>
</feature>
<feature type="helix" evidence="20">
    <location>
        <begin position="392"/>
        <end position="402"/>
    </location>
</feature>
<feature type="turn" evidence="20">
    <location>
        <begin position="407"/>
        <end position="409"/>
    </location>
</feature>
<feature type="helix" evidence="20">
    <location>
        <begin position="410"/>
        <end position="412"/>
    </location>
</feature>
<feature type="strand" evidence="20">
    <location>
        <begin position="419"/>
        <end position="426"/>
    </location>
</feature>
<feature type="strand" evidence="20">
    <location>
        <begin position="429"/>
        <end position="436"/>
    </location>
</feature>
<evidence type="ECO:0000250" key="1"/>
<evidence type="ECO:0000250" key="2">
    <source>
        <dbReference type="UniProtKB" id="P07953"/>
    </source>
</evidence>
<evidence type="ECO:0000250" key="3">
    <source>
        <dbReference type="UniProtKB" id="Q16875"/>
    </source>
</evidence>
<evidence type="ECO:0000255" key="4"/>
<evidence type="ECO:0000256" key="5">
    <source>
        <dbReference type="SAM" id="MobiDB-lite"/>
    </source>
</evidence>
<evidence type="ECO:0000269" key="6">
    <source>
    </source>
</evidence>
<evidence type="ECO:0000269" key="7">
    <source>
    </source>
</evidence>
<evidence type="ECO:0000303" key="8">
    <source>
    </source>
</evidence>
<evidence type="ECO:0000303" key="9">
    <source>
    </source>
</evidence>
<evidence type="ECO:0000303" key="10">
    <source ref="3"/>
</evidence>
<evidence type="ECO:0000305" key="11"/>
<evidence type="ECO:0000305" key="12">
    <source>
    </source>
</evidence>
<evidence type="ECO:0000312" key="13">
    <source>
        <dbReference type="HGNC" id="HGNC:8873"/>
    </source>
</evidence>
<evidence type="ECO:0007744" key="14">
    <source>
    </source>
</evidence>
<evidence type="ECO:0007744" key="15">
    <source>
    </source>
</evidence>
<evidence type="ECO:0007744" key="16">
    <source>
    </source>
</evidence>
<evidence type="ECO:0007744" key="17">
    <source>
    </source>
</evidence>
<evidence type="ECO:0007744" key="18">
    <source>
    </source>
</evidence>
<evidence type="ECO:0007744" key="19">
    <source>
    </source>
</evidence>
<evidence type="ECO:0007829" key="20">
    <source>
        <dbReference type="PDB" id="5HTK"/>
    </source>
</evidence>
<accession>O60825</accession>
<accession>O60824</accession>
<accession>Q5VVQ3</accession>
<accession>Q5VVQ4</accession>
<accession>Q9H3P1</accession>